<proteinExistence type="evidence at protein level"/>
<reference key="1">
    <citation type="journal article" date="2001" name="Lancet">
        <title>Whole genome sequencing of meticillin-resistant Staphylococcus aureus.</title>
        <authorList>
            <person name="Kuroda M."/>
            <person name="Ohta T."/>
            <person name="Uchiyama I."/>
            <person name="Baba T."/>
            <person name="Yuzawa H."/>
            <person name="Kobayashi I."/>
            <person name="Cui L."/>
            <person name="Oguchi A."/>
            <person name="Aoki K."/>
            <person name="Nagai Y."/>
            <person name="Lian J.-Q."/>
            <person name="Ito T."/>
            <person name="Kanamori M."/>
            <person name="Matsumaru H."/>
            <person name="Maruyama A."/>
            <person name="Murakami H."/>
            <person name="Hosoyama A."/>
            <person name="Mizutani-Ui Y."/>
            <person name="Takahashi N.K."/>
            <person name="Sawano T."/>
            <person name="Inoue R."/>
            <person name="Kaito C."/>
            <person name="Sekimizu K."/>
            <person name="Hirakawa H."/>
            <person name="Kuhara S."/>
            <person name="Goto S."/>
            <person name="Yabuzaki J."/>
            <person name="Kanehisa M."/>
            <person name="Yamashita A."/>
            <person name="Oshima K."/>
            <person name="Furuya K."/>
            <person name="Yoshino C."/>
            <person name="Shiba T."/>
            <person name="Hattori M."/>
            <person name="Ogasawara N."/>
            <person name="Hayashi H."/>
            <person name="Hiramatsu K."/>
        </authorList>
    </citation>
    <scope>NUCLEOTIDE SEQUENCE [LARGE SCALE GENOMIC DNA]</scope>
    <source>
        <strain>N315</strain>
    </source>
</reference>
<reference key="2">
    <citation type="submission" date="2007-10" db="UniProtKB">
        <title>Shotgun proteomic analysis of total and membrane protein extracts of S. aureus strain N315.</title>
        <authorList>
            <person name="Vaezzadeh A.R."/>
            <person name="Deshusses J."/>
            <person name="Lescuyer P."/>
            <person name="Hochstrasser D.F."/>
        </authorList>
    </citation>
    <scope>IDENTIFICATION BY MASS SPECTROMETRY [LARGE SCALE ANALYSIS]</scope>
    <source>
        <strain>N315</strain>
    </source>
</reference>
<comment type="function">
    <text evidence="1">ATPase subunit of a proteasome-like degradation complex; this subunit has chaperone activity. The binding of ATP and its subsequent hydrolysis by HslU are essential for unfolding of protein substrates subsequently hydrolyzed by HslV. HslU recognizes the N-terminal part of its protein substrates and unfolds these before they are guided to HslV for hydrolysis.</text>
</comment>
<comment type="subunit">
    <text evidence="1">A double ring-shaped homohexamer of HslV is capped on each side by a ring-shaped HslU homohexamer. The assembly of the HslU/HslV complex is dependent on binding of ATP.</text>
</comment>
<comment type="subcellular location">
    <subcellularLocation>
        <location evidence="1">Cytoplasm</location>
    </subcellularLocation>
</comment>
<comment type="similarity">
    <text evidence="1">Belongs to the ClpX chaperone family. HslU subfamily.</text>
</comment>
<feature type="chain" id="PRO_0000160549" description="ATP-dependent protease ATPase subunit HslU">
    <location>
        <begin position="1"/>
        <end position="467"/>
    </location>
</feature>
<feature type="region of interest" description="Disordered" evidence="2">
    <location>
        <begin position="149"/>
        <end position="192"/>
    </location>
</feature>
<feature type="compositionally biased region" description="Basic and acidic residues" evidence="2">
    <location>
        <begin position="178"/>
        <end position="192"/>
    </location>
</feature>
<feature type="binding site" evidence="1">
    <location>
        <position position="22"/>
    </location>
    <ligand>
        <name>ATP</name>
        <dbReference type="ChEBI" id="CHEBI:30616"/>
    </ligand>
</feature>
<feature type="binding site" evidence="1">
    <location>
        <begin position="64"/>
        <end position="69"/>
    </location>
    <ligand>
        <name>ATP</name>
        <dbReference type="ChEBI" id="CHEBI:30616"/>
    </ligand>
</feature>
<feature type="binding site" evidence="1">
    <location>
        <position position="280"/>
    </location>
    <ligand>
        <name>ATP</name>
        <dbReference type="ChEBI" id="CHEBI:30616"/>
    </ligand>
</feature>
<feature type="binding site" evidence="1">
    <location>
        <position position="345"/>
    </location>
    <ligand>
        <name>ATP</name>
        <dbReference type="ChEBI" id="CHEBI:30616"/>
    </ligand>
</feature>
<feature type="binding site" evidence="1">
    <location>
        <position position="417"/>
    </location>
    <ligand>
        <name>ATP</name>
        <dbReference type="ChEBI" id="CHEBI:30616"/>
    </ligand>
</feature>
<organism>
    <name type="scientific">Staphylococcus aureus (strain N315)</name>
    <dbReference type="NCBI Taxonomy" id="158879"/>
    <lineage>
        <taxon>Bacteria</taxon>
        <taxon>Bacillati</taxon>
        <taxon>Bacillota</taxon>
        <taxon>Bacilli</taxon>
        <taxon>Bacillales</taxon>
        <taxon>Staphylococcaceae</taxon>
        <taxon>Staphylococcus</taxon>
    </lineage>
</organism>
<dbReference type="EMBL" id="BA000018">
    <property type="protein sequence ID" value="BAB42349.1"/>
    <property type="molecule type" value="Genomic_DNA"/>
</dbReference>
<dbReference type="PIR" id="A89899">
    <property type="entry name" value="A89899"/>
</dbReference>
<dbReference type="RefSeq" id="WP_000379044.1">
    <property type="nucleotide sequence ID" value="NC_002745.2"/>
</dbReference>
<dbReference type="SMR" id="P63797"/>
<dbReference type="EnsemblBacteria" id="BAB42349">
    <property type="protein sequence ID" value="BAB42349"/>
    <property type="gene ID" value="BAB42349"/>
</dbReference>
<dbReference type="KEGG" id="sau:SA1097"/>
<dbReference type="HOGENOM" id="CLU_033123_0_0_9"/>
<dbReference type="GO" id="GO:0009376">
    <property type="term" value="C:HslUV protease complex"/>
    <property type="evidence" value="ECO:0007669"/>
    <property type="project" value="UniProtKB-UniRule"/>
</dbReference>
<dbReference type="GO" id="GO:0005524">
    <property type="term" value="F:ATP binding"/>
    <property type="evidence" value="ECO:0007669"/>
    <property type="project" value="UniProtKB-UniRule"/>
</dbReference>
<dbReference type="GO" id="GO:0016887">
    <property type="term" value="F:ATP hydrolysis activity"/>
    <property type="evidence" value="ECO:0007669"/>
    <property type="project" value="InterPro"/>
</dbReference>
<dbReference type="GO" id="GO:0008233">
    <property type="term" value="F:peptidase activity"/>
    <property type="evidence" value="ECO:0007669"/>
    <property type="project" value="InterPro"/>
</dbReference>
<dbReference type="GO" id="GO:0036402">
    <property type="term" value="F:proteasome-activating activity"/>
    <property type="evidence" value="ECO:0007669"/>
    <property type="project" value="UniProtKB-UniRule"/>
</dbReference>
<dbReference type="GO" id="GO:0043335">
    <property type="term" value="P:protein unfolding"/>
    <property type="evidence" value="ECO:0007669"/>
    <property type="project" value="UniProtKB-UniRule"/>
</dbReference>
<dbReference type="GO" id="GO:0051603">
    <property type="term" value="P:proteolysis involved in protein catabolic process"/>
    <property type="evidence" value="ECO:0007669"/>
    <property type="project" value="TreeGrafter"/>
</dbReference>
<dbReference type="CDD" id="cd19498">
    <property type="entry name" value="RecA-like_HslU"/>
    <property type="match status" value="1"/>
</dbReference>
<dbReference type="FunFam" id="3.40.50.300:FF:000220">
    <property type="entry name" value="ATP-dependent protease ATPase subunit HslU"/>
    <property type="match status" value="1"/>
</dbReference>
<dbReference type="Gene3D" id="1.10.8.60">
    <property type="match status" value="1"/>
</dbReference>
<dbReference type="Gene3D" id="3.40.50.300">
    <property type="entry name" value="P-loop containing nucleotide triphosphate hydrolases"/>
    <property type="match status" value="2"/>
</dbReference>
<dbReference type="HAMAP" id="MF_00249">
    <property type="entry name" value="HslU"/>
    <property type="match status" value="1"/>
</dbReference>
<dbReference type="InterPro" id="IPR003593">
    <property type="entry name" value="AAA+_ATPase"/>
</dbReference>
<dbReference type="InterPro" id="IPR050052">
    <property type="entry name" value="ATP-dep_Clp_protease_ClpX"/>
</dbReference>
<dbReference type="InterPro" id="IPR003959">
    <property type="entry name" value="ATPase_AAA_core"/>
</dbReference>
<dbReference type="InterPro" id="IPR019489">
    <property type="entry name" value="Clp_ATPase_C"/>
</dbReference>
<dbReference type="InterPro" id="IPR004491">
    <property type="entry name" value="HslU"/>
</dbReference>
<dbReference type="InterPro" id="IPR027417">
    <property type="entry name" value="P-loop_NTPase"/>
</dbReference>
<dbReference type="NCBIfam" id="TIGR00390">
    <property type="entry name" value="hslU"/>
    <property type="match status" value="1"/>
</dbReference>
<dbReference type="NCBIfam" id="NF003544">
    <property type="entry name" value="PRK05201.1"/>
    <property type="match status" value="1"/>
</dbReference>
<dbReference type="PANTHER" id="PTHR48102">
    <property type="entry name" value="ATP-DEPENDENT CLP PROTEASE ATP-BINDING SUBUNIT CLPX-LIKE, MITOCHONDRIAL-RELATED"/>
    <property type="match status" value="1"/>
</dbReference>
<dbReference type="PANTHER" id="PTHR48102:SF3">
    <property type="entry name" value="ATP-DEPENDENT PROTEASE ATPASE SUBUNIT HSLU"/>
    <property type="match status" value="1"/>
</dbReference>
<dbReference type="Pfam" id="PF00004">
    <property type="entry name" value="AAA"/>
    <property type="match status" value="1"/>
</dbReference>
<dbReference type="Pfam" id="PF07724">
    <property type="entry name" value="AAA_2"/>
    <property type="match status" value="1"/>
</dbReference>
<dbReference type="Pfam" id="PF10431">
    <property type="entry name" value="ClpB_D2-small"/>
    <property type="match status" value="1"/>
</dbReference>
<dbReference type="SMART" id="SM00382">
    <property type="entry name" value="AAA"/>
    <property type="match status" value="1"/>
</dbReference>
<dbReference type="SMART" id="SM01086">
    <property type="entry name" value="ClpB_D2-small"/>
    <property type="match status" value="1"/>
</dbReference>
<dbReference type="SUPFAM" id="SSF52540">
    <property type="entry name" value="P-loop containing nucleoside triphosphate hydrolases"/>
    <property type="match status" value="1"/>
</dbReference>
<protein>
    <recommendedName>
        <fullName evidence="1">ATP-dependent protease ATPase subunit HslU</fullName>
    </recommendedName>
    <alternativeName>
        <fullName evidence="1">Unfoldase HslU</fullName>
    </alternativeName>
</protein>
<evidence type="ECO:0000255" key="1">
    <source>
        <dbReference type="HAMAP-Rule" id="MF_00249"/>
    </source>
</evidence>
<evidence type="ECO:0000256" key="2">
    <source>
        <dbReference type="SAM" id="MobiDB-lite"/>
    </source>
</evidence>
<accession>P63797</accession>
<accession>Q99UL7</accession>
<sequence length="467" mass="52329">MDTAGIRLTPKEIVSKLNEYIVGQNDAKRKVAIALRNRYRRSLLDEESKQEISPKNILMIGPTGVGKTEIARRMAKVVGAPFIKVEATKFTELGYVGRDVESMVRDLVDVSVRLVKAQKKSLVQDEATAKANEKLVKLLVPSMKKKASQTNNPLESLFGGAIPNFGQNNEDEEEPPTEEIKTKRSEIKRQLEEGKLEKEKVRIKVEQDPGALGMLGTNQNQQMQEMMNQLMPKKKVEREVAVETARKILADSYADELIDQESANQEALELAEQMGIIFIDEIDKVATNNHNSGQDVSRQGVQRDILPILEGSVIQTKYGTVNTEHMLFIGAGAFHVSKPSDLIPELQGRFPIRVELDSLSVEDFVRILTEPKLSLIKQYEALLQTEEVTVNFTDEAITRLAEIAYQVNQDTDNIGARRLHTILEKMLEDLSFEAPSMPNAVVDITPQYVDDKLKSISTNKDLSAFIL</sequence>
<keyword id="KW-0067">ATP-binding</keyword>
<keyword id="KW-0143">Chaperone</keyword>
<keyword id="KW-0963">Cytoplasm</keyword>
<keyword id="KW-0547">Nucleotide-binding</keyword>
<gene>
    <name evidence="1" type="primary">hslU</name>
    <name type="synonym">clpY</name>
    <name type="ordered locus">SA1097</name>
</gene>
<name>HSLU_STAAN</name>